<reference key="1">
    <citation type="journal article" date="2011" name="J. Bacteriol.">
        <title>Comparative genomics of 28 Salmonella enterica isolates: evidence for CRISPR-mediated adaptive sublineage evolution.</title>
        <authorList>
            <person name="Fricke W.F."/>
            <person name="Mammel M.K."/>
            <person name="McDermott P.F."/>
            <person name="Tartera C."/>
            <person name="White D.G."/>
            <person name="Leclerc J.E."/>
            <person name="Ravel J."/>
            <person name="Cebula T.A."/>
        </authorList>
    </citation>
    <scope>NUCLEOTIDE SEQUENCE [LARGE SCALE GENOMIC DNA]</scope>
    <source>
        <strain>SL476</strain>
    </source>
</reference>
<name>ISPD_SALHS</name>
<feature type="chain" id="PRO_1000094346" description="2-C-methyl-D-erythritol 4-phosphate cytidylyltransferase">
    <location>
        <begin position="1"/>
        <end position="236"/>
    </location>
</feature>
<feature type="site" description="Transition state stabilizer" evidence="1">
    <location>
        <position position="20"/>
    </location>
</feature>
<feature type="site" description="Transition state stabilizer" evidence="1">
    <location>
        <position position="27"/>
    </location>
</feature>
<feature type="site" description="Positions MEP for the nucleophilic attack" evidence="1">
    <location>
        <position position="157"/>
    </location>
</feature>
<feature type="site" description="Positions MEP for the nucleophilic attack" evidence="1">
    <location>
        <position position="213"/>
    </location>
</feature>
<proteinExistence type="inferred from homology"/>
<organism>
    <name type="scientific">Salmonella heidelberg (strain SL476)</name>
    <dbReference type="NCBI Taxonomy" id="454169"/>
    <lineage>
        <taxon>Bacteria</taxon>
        <taxon>Pseudomonadati</taxon>
        <taxon>Pseudomonadota</taxon>
        <taxon>Gammaproteobacteria</taxon>
        <taxon>Enterobacterales</taxon>
        <taxon>Enterobacteriaceae</taxon>
        <taxon>Salmonella</taxon>
    </lineage>
</organism>
<gene>
    <name evidence="1" type="primary">ispD</name>
    <name type="ordered locus">SeHA_C3120</name>
</gene>
<evidence type="ECO:0000255" key="1">
    <source>
        <dbReference type="HAMAP-Rule" id="MF_00108"/>
    </source>
</evidence>
<comment type="function">
    <text evidence="1">Catalyzes the formation of 4-diphosphocytidyl-2-C-methyl-D-erythritol from CTP and 2-C-methyl-D-erythritol 4-phosphate (MEP).</text>
</comment>
<comment type="catalytic activity">
    <reaction evidence="1">
        <text>2-C-methyl-D-erythritol 4-phosphate + CTP + H(+) = 4-CDP-2-C-methyl-D-erythritol + diphosphate</text>
        <dbReference type="Rhea" id="RHEA:13429"/>
        <dbReference type="ChEBI" id="CHEBI:15378"/>
        <dbReference type="ChEBI" id="CHEBI:33019"/>
        <dbReference type="ChEBI" id="CHEBI:37563"/>
        <dbReference type="ChEBI" id="CHEBI:57823"/>
        <dbReference type="ChEBI" id="CHEBI:58262"/>
        <dbReference type="EC" id="2.7.7.60"/>
    </reaction>
</comment>
<comment type="pathway">
    <text evidence="1">Isoprenoid biosynthesis; isopentenyl diphosphate biosynthesis via DXP pathway; isopentenyl diphosphate from 1-deoxy-D-xylulose 5-phosphate: step 2/6.</text>
</comment>
<comment type="subunit">
    <text evidence="1">Homodimer.</text>
</comment>
<comment type="similarity">
    <text evidence="1">Belongs to the IspD/TarI cytidylyltransferase family. IspD subfamily.</text>
</comment>
<sequence length="236" mass="25759">MAATLLDVCAVVPAAGFGRRMQTECPKQYLSIGNKTILEHSVHALLAHPRVTRVVIAISPGDHRFAQLPLANHPQITVVDGGNERADSVLAGLQAVAKAQWVLVHDAARPCLHQDDLARLLTISENSRVGGILASPVRDTMKRGEPGKNAIAHTVERADLWHALTPQFFPRELLHDCLTRALNEGATITDEASALEYCGFHPALVEGRADNIKVTRPEDLALAEFYLTRTIHQEKA</sequence>
<dbReference type="EC" id="2.7.7.60" evidence="1"/>
<dbReference type="EMBL" id="CP001120">
    <property type="protein sequence ID" value="ACF66727.1"/>
    <property type="molecule type" value="Genomic_DNA"/>
</dbReference>
<dbReference type="RefSeq" id="WP_000741653.1">
    <property type="nucleotide sequence ID" value="NC_011083.1"/>
</dbReference>
<dbReference type="SMR" id="B4TFW7"/>
<dbReference type="KEGG" id="seh:SeHA_C3120"/>
<dbReference type="HOGENOM" id="CLU_061281_3_1_6"/>
<dbReference type="UniPathway" id="UPA00056">
    <property type="reaction ID" value="UER00093"/>
</dbReference>
<dbReference type="Proteomes" id="UP000001866">
    <property type="component" value="Chromosome"/>
</dbReference>
<dbReference type="GO" id="GO:0050518">
    <property type="term" value="F:2-C-methyl-D-erythritol 4-phosphate cytidylyltransferase activity"/>
    <property type="evidence" value="ECO:0007669"/>
    <property type="project" value="UniProtKB-UniRule"/>
</dbReference>
<dbReference type="GO" id="GO:0019288">
    <property type="term" value="P:isopentenyl diphosphate biosynthetic process, methylerythritol 4-phosphate pathway"/>
    <property type="evidence" value="ECO:0007669"/>
    <property type="project" value="UniProtKB-UniRule"/>
</dbReference>
<dbReference type="CDD" id="cd02516">
    <property type="entry name" value="CDP-ME_synthetase"/>
    <property type="match status" value="1"/>
</dbReference>
<dbReference type="FunFam" id="3.90.550.10:FF:000003">
    <property type="entry name" value="2-C-methyl-D-erythritol 4-phosphate cytidylyltransferase"/>
    <property type="match status" value="1"/>
</dbReference>
<dbReference type="Gene3D" id="3.90.550.10">
    <property type="entry name" value="Spore Coat Polysaccharide Biosynthesis Protein SpsA, Chain A"/>
    <property type="match status" value="1"/>
</dbReference>
<dbReference type="HAMAP" id="MF_00108">
    <property type="entry name" value="IspD"/>
    <property type="match status" value="1"/>
</dbReference>
<dbReference type="InterPro" id="IPR001228">
    <property type="entry name" value="IspD"/>
</dbReference>
<dbReference type="InterPro" id="IPR034683">
    <property type="entry name" value="IspD/TarI"/>
</dbReference>
<dbReference type="InterPro" id="IPR050088">
    <property type="entry name" value="IspD/TarI_cytidylyltransf_bact"/>
</dbReference>
<dbReference type="InterPro" id="IPR018294">
    <property type="entry name" value="ISPD_synthase_CS"/>
</dbReference>
<dbReference type="InterPro" id="IPR029044">
    <property type="entry name" value="Nucleotide-diphossugar_trans"/>
</dbReference>
<dbReference type="NCBIfam" id="TIGR00453">
    <property type="entry name" value="ispD"/>
    <property type="match status" value="1"/>
</dbReference>
<dbReference type="PANTHER" id="PTHR32125">
    <property type="entry name" value="2-C-METHYL-D-ERYTHRITOL 4-PHOSPHATE CYTIDYLYLTRANSFERASE, CHLOROPLASTIC"/>
    <property type="match status" value="1"/>
</dbReference>
<dbReference type="PANTHER" id="PTHR32125:SF4">
    <property type="entry name" value="2-C-METHYL-D-ERYTHRITOL 4-PHOSPHATE CYTIDYLYLTRANSFERASE, CHLOROPLASTIC"/>
    <property type="match status" value="1"/>
</dbReference>
<dbReference type="Pfam" id="PF01128">
    <property type="entry name" value="IspD"/>
    <property type="match status" value="1"/>
</dbReference>
<dbReference type="SUPFAM" id="SSF53448">
    <property type="entry name" value="Nucleotide-diphospho-sugar transferases"/>
    <property type="match status" value="1"/>
</dbReference>
<dbReference type="PROSITE" id="PS01295">
    <property type="entry name" value="ISPD"/>
    <property type="match status" value="1"/>
</dbReference>
<keyword id="KW-0414">Isoprene biosynthesis</keyword>
<keyword id="KW-0548">Nucleotidyltransferase</keyword>
<keyword id="KW-0808">Transferase</keyword>
<protein>
    <recommendedName>
        <fullName evidence="1">2-C-methyl-D-erythritol 4-phosphate cytidylyltransferase</fullName>
        <ecNumber evidence="1">2.7.7.60</ecNumber>
    </recommendedName>
    <alternativeName>
        <fullName evidence="1">4-diphosphocytidyl-2C-methyl-D-erythritol synthase</fullName>
    </alternativeName>
    <alternativeName>
        <fullName evidence="1">MEP cytidylyltransferase</fullName>
        <shortName evidence="1">MCT</shortName>
    </alternativeName>
</protein>
<accession>B4TFW7</accession>